<accession>C6DHK1</accession>
<proteinExistence type="inferred from homology"/>
<protein>
    <recommendedName>
        <fullName evidence="1">Cation-efflux pump FieF</fullName>
    </recommendedName>
</protein>
<reference key="1">
    <citation type="submission" date="2009-07" db="EMBL/GenBank/DDBJ databases">
        <title>Complete sequence of Pectobacterium carotovorum subsp. carotovorum PC1.</title>
        <authorList>
            <consortium name="US DOE Joint Genome Institute"/>
            <person name="Lucas S."/>
            <person name="Copeland A."/>
            <person name="Lapidus A."/>
            <person name="Glavina del Rio T."/>
            <person name="Tice H."/>
            <person name="Bruce D."/>
            <person name="Goodwin L."/>
            <person name="Pitluck S."/>
            <person name="Munk A.C."/>
            <person name="Brettin T."/>
            <person name="Detter J.C."/>
            <person name="Han C."/>
            <person name="Tapia R."/>
            <person name="Larimer F."/>
            <person name="Land M."/>
            <person name="Hauser L."/>
            <person name="Kyrpides N."/>
            <person name="Mikhailova N."/>
            <person name="Balakrishnan V."/>
            <person name="Glasner J."/>
            <person name="Perna N.T."/>
        </authorList>
    </citation>
    <scope>NUCLEOTIDE SEQUENCE [LARGE SCALE GENOMIC DNA]</scope>
    <source>
        <strain>PC1</strain>
    </source>
</reference>
<feature type="chain" id="PRO_1000215265" description="Cation-efflux pump FieF">
    <location>
        <begin position="1"/>
        <end position="300"/>
    </location>
</feature>
<feature type="transmembrane region" description="Helical" evidence="1">
    <location>
        <begin position="11"/>
        <end position="31"/>
    </location>
</feature>
<feature type="transmembrane region" description="Helical" evidence="1">
    <location>
        <begin position="40"/>
        <end position="60"/>
    </location>
</feature>
<feature type="transmembrane region" description="Helical" evidence="1">
    <location>
        <begin position="81"/>
        <end position="101"/>
    </location>
</feature>
<feature type="transmembrane region" description="Helical" evidence="1">
    <location>
        <begin position="114"/>
        <end position="134"/>
    </location>
</feature>
<feature type="transmembrane region" description="Helical" evidence="1">
    <location>
        <begin position="156"/>
        <end position="176"/>
    </location>
</feature>
<feature type="transmembrane region" description="Helical" evidence="1">
    <location>
        <begin position="182"/>
        <end position="202"/>
    </location>
</feature>
<feature type="binding site" evidence="1">
    <location>
        <position position="45"/>
    </location>
    <ligand>
        <name>Zn(2+)</name>
        <dbReference type="ChEBI" id="CHEBI:29105"/>
    </ligand>
</feature>
<feature type="binding site" evidence="1">
    <location>
        <position position="49"/>
    </location>
    <ligand>
        <name>Zn(2+)</name>
        <dbReference type="ChEBI" id="CHEBI:29105"/>
    </ligand>
</feature>
<feature type="binding site" evidence="1">
    <location>
        <position position="153"/>
    </location>
    <ligand>
        <name>Zn(2+)</name>
        <dbReference type="ChEBI" id="CHEBI:29105"/>
    </ligand>
</feature>
<feature type="binding site" evidence="1">
    <location>
        <position position="157"/>
    </location>
    <ligand>
        <name>Zn(2+)</name>
        <dbReference type="ChEBI" id="CHEBI:29105"/>
    </ligand>
</feature>
<sequence length="300" mass="32751">MNPHYARLVTLAAVSATAVALVLFIMKVFAWWHTGSVSLLASLVDSLVDIAASLVNLLVVRYSLQPADTEHAFGHGKAESLAALAQSMFISGSALFLILTGLQHSLEPQTLHAPEVGMWVTLIALVATLLLVSFQRWVVKRTHSQAVRADMLHYQSDLLMNGAILVALALSWKGITRADSLFALGIGGYILYSALRMGYDAVQSLLDRALPDDEHRAIAEVIVNWPGIRGAHALRTRRSGPTRFIQLHLEMDDALPLVQAHQIADDLEQALLKRFPGADIIIHQDPVSAVPENQRGRLTA</sequence>
<evidence type="ECO:0000255" key="1">
    <source>
        <dbReference type="HAMAP-Rule" id="MF_01425"/>
    </source>
</evidence>
<organism>
    <name type="scientific">Pectobacterium carotovorum subsp. carotovorum (strain PC1)</name>
    <dbReference type="NCBI Taxonomy" id="561230"/>
    <lineage>
        <taxon>Bacteria</taxon>
        <taxon>Pseudomonadati</taxon>
        <taxon>Pseudomonadota</taxon>
        <taxon>Gammaproteobacteria</taxon>
        <taxon>Enterobacterales</taxon>
        <taxon>Pectobacteriaceae</taxon>
        <taxon>Pectobacterium</taxon>
    </lineage>
</organism>
<name>FIEF_PECCP</name>
<keyword id="KW-0997">Cell inner membrane</keyword>
<keyword id="KW-1003">Cell membrane</keyword>
<keyword id="KW-0406">Ion transport</keyword>
<keyword id="KW-0408">Iron</keyword>
<keyword id="KW-0410">Iron transport</keyword>
<keyword id="KW-0472">Membrane</keyword>
<keyword id="KW-0479">Metal-binding</keyword>
<keyword id="KW-0812">Transmembrane</keyword>
<keyword id="KW-1133">Transmembrane helix</keyword>
<keyword id="KW-0813">Transport</keyword>
<keyword id="KW-0862">Zinc</keyword>
<keyword id="KW-0864">Zinc transport</keyword>
<dbReference type="EMBL" id="CP001657">
    <property type="protein sequence ID" value="ACT11201.1"/>
    <property type="molecule type" value="Genomic_DNA"/>
</dbReference>
<dbReference type="RefSeq" id="WP_012772881.1">
    <property type="nucleotide sequence ID" value="NC_012917.1"/>
</dbReference>
<dbReference type="SMR" id="C6DHK1"/>
<dbReference type="STRING" id="561230.PC1_0139"/>
<dbReference type="GeneID" id="67791982"/>
<dbReference type="KEGG" id="pct:PC1_0139"/>
<dbReference type="eggNOG" id="COG0053">
    <property type="taxonomic scope" value="Bacteria"/>
</dbReference>
<dbReference type="HOGENOM" id="CLU_013430_3_0_6"/>
<dbReference type="OrthoDB" id="9806522at2"/>
<dbReference type="Proteomes" id="UP000002736">
    <property type="component" value="Chromosome"/>
</dbReference>
<dbReference type="GO" id="GO:0005886">
    <property type="term" value="C:plasma membrane"/>
    <property type="evidence" value="ECO:0007669"/>
    <property type="project" value="UniProtKB-SubCell"/>
</dbReference>
<dbReference type="GO" id="GO:0015086">
    <property type="term" value="F:cadmium ion transmembrane transporter activity"/>
    <property type="evidence" value="ECO:0007669"/>
    <property type="project" value="UniProtKB-UniRule"/>
</dbReference>
<dbReference type="GO" id="GO:0015093">
    <property type="term" value="F:ferrous iron transmembrane transporter activity"/>
    <property type="evidence" value="ECO:0007669"/>
    <property type="project" value="TreeGrafter"/>
</dbReference>
<dbReference type="GO" id="GO:0046872">
    <property type="term" value="F:metal ion binding"/>
    <property type="evidence" value="ECO:0007669"/>
    <property type="project" value="UniProtKB-KW"/>
</dbReference>
<dbReference type="GO" id="GO:0015341">
    <property type="term" value="F:zinc efflux antiporter activity"/>
    <property type="evidence" value="ECO:0007669"/>
    <property type="project" value="TreeGrafter"/>
</dbReference>
<dbReference type="GO" id="GO:0006882">
    <property type="term" value="P:intracellular zinc ion homeostasis"/>
    <property type="evidence" value="ECO:0007669"/>
    <property type="project" value="TreeGrafter"/>
</dbReference>
<dbReference type="FunFam" id="1.20.1510.10:FF:000001">
    <property type="entry name" value="Ferrous-iron efflux pump FieF"/>
    <property type="match status" value="1"/>
</dbReference>
<dbReference type="FunFam" id="3.30.70.1350:FF:000002">
    <property type="entry name" value="Ferrous-iron efflux pump FieF"/>
    <property type="match status" value="1"/>
</dbReference>
<dbReference type="Gene3D" id="1.20.1510.10">
    <property type="entry name" value="Cation efflux protein transmembrane domain"/>
    <property type="match status" value="1"/>
</dbReference>
<dbReference type="Gene3D" id="3.30.70.1350">
    <property type="entry name" value="Cation efflux protein, cytoplasmic domain"/>
    <property type="match status" value="1"/>
</dbReference>
<dbReference type="HAMAP" id="MF_01425">
    <property type="entry name" value="Cation_efflux_FieF"/>
    <property type="match status" value="1"/>
</dbReference>
<dbReference type="InterPro" id="IPR002524">
    <property type="entry name" value="Cation_efflux"/>
</dbReference>
<dbReference type="InterPro" id="IPR027470">
    <property type="entry name" value="Cation_efflux_CTD"/>
</dbReference>
<dbReference type="InterPro" id="IPR036837">
    <property type="entry name" value="Cation_efflux_CTD_sf"/>
</dbReference>
<dbReference type="InterPro" id="IPR023783">
    <property type="entry name" value="Cation_efflux_FieF"/>
</dbReference>
<dbReference type="InterPro" id="IPR027469">
    <property type="entry name" value="Cation_efflux_TMD_sf"/>
</dbReference>
<dbReference type="InterPro" id="IPR050291">
    <property type="entry name" value="CDF_Transporter"/>
</dbReference>
<dbReference type="NCBIfam" id="TIGR01297">
    <property type="entry name" value="CDF"/>
    <property type="match status" value="1"/>
</dbReference>
<dbReference type="NCBIfam" id="NF007064">
    <property type="entry name" value="PRK09509.1"/>
    <property type="match status" value="1"/>
</dbReference>
<dbReference type="PANTHER" id="PTHR43840:SF41">
    <property type="entry name" value="CATION-EFFLUX PUMP FIEF"/>
    <property type="match status" value="1"/>
</dbReference>
<dbReference type="PANTHER" id="PTHR43840">
    <property type="entry name" value="MITOCHONDRIAL METAL TRANSPORTER 1-RELATED"/>
    <property type="match status" value="1"/>
</dbReference>
<dbReference type="Pfam" id="PF01545">
    <property type="entry name" value="Cation_efflux"/>
    <property type="match status" value="1"/>
</dbReference>
<dbReference type="Pfam" id="PF16916">
    <property type="entry name" value="ZT_dimer"/>
    <property type="match status" value="1"/>
</dbReference>
<dbReference type="SUPFAM" id="SSF160240">
    <property type="entry name" value="Cation efflux protein cytoplasmic domain-like"/>
    <property type="match status" value="1"/>
</dbReference>
<dbReference type="SUPFAM" id="SSF161111">
    <property type="entry name" value="Cation efflux protein transmembrane domain-like"/>
    <property type="match status" value="1"/>
</dbReference>
<gene>
    <name evidence="1" type="primary">fieF</name>
    <name type="ordered locus">PC1_0139</name>
</gene>
<comment type="function">
    <text evidence="1">Divalent metal cation transporter which exports Zn(2+), Cd(2+) and possibly Fe(2+). May be involved in zinc and iron detoxification by efflux.</text>
</comment>
<comment type="catalytic activity">
    <reaction evidence="1">
        <text>Zn(2+)(in) + H(+)(out) = Zn(2+)(out) + H(+)(in)</text>
        <dbReference type="Rhea" id="RHEA:28839"/>
        <dbReference type="ChEBI" id="CHEBI:15378"/>
        <dbReference type="ChEBI" id="CHEBI:29105"/>
    </reaction>
</comment>
<comment type="catalytic activity">
    <reaction evidence="1">
        <text>Cd(2+)(in) + H(+)(out) = Cd(2+)(out) + H(+)(in)</text>
        <dbReference type="Rhea" id="RHEA:28739"/>
        <dbReference type="ChEBI" id="CHEBI:15378"/>
        <dbReference type="ChEBI" id="CHEBI:48775"/>
    </reaction>
</comment>
<comment type="catalytic activity">
    <reaction evidence="1">
        <text>Fe(2+)(in) + H(+)(out) = Fe(2+)(out) + H(+)(in)</text>
        <dbReference type="Rhea" id="RHEA:29439"/>
        <dbReference type="ChEBI" id="CHEBI:15378"/>
        <dbReference type="ChEBI" id="CHEBI:29033"/>
    </reaction>
</comment>
<comment type="subunit">
    <text evidence="1">Homodimer.</text>
</comment>
<comment type="subcellular location">
    <subcellularLocation>
        <location evidence="1">Cell inner membrane</location>
        <topology evidence="1">Multi-pass membrane protein</topology>
    </subcellularLocation>
</comment>
<comment type="similarity">
    <text evidence="1">Belongs to the cation diffusion facilitator (CDF) transporter (TC 2.A.4) family. FieF subfamily.</text>
</comment>